<sequence length="408" mass="46072">MKEKVILAYSGGLDTTAIIPWLKETYNYDVVCVCADCGQEEELDGLEQRALSCGAAKLYIEDITDEFCDNYIVPCVQAHAVYENKYLLGTSMARPLIAKRLVEIARKEGAVAICHGATGKGNDQIRFELTIKALAPDIKIIAPWRDSNWKLQSREDEIEYCRQHGIHLPFSTDCSYSRDRNIWHISHEGLELEDPANEPNYKHLLVLGCTPEEAPDEPEYVTMTFEKGVPKSVNGKAMKVSDIIRELNRLGAKHGIGIIDIVENRVVGMKSRGVYETPGGTILYEAHQQLEELVLDRDTTTFKMDVGNKFAQVVYEGKWETPLREALQAFVEKTQEYVTGEVKFRLYKGNIIKAGTTSPYSLYNESIASFKTGDMYDHHDADGFINLFGLSLKVRAMKKLENEKKNNK</sequence>
<name>ASSY_LACE2</name>
<organism>
    <name type="scientific">Lachnospira eligens (strain ATCC 27750 / DSM 3376 / VPI C15-48 / C15-B4)</name>
    <name type="common">Eubacterium eligens</name>
    <dbReference type="NCBI Taxonomy" id="515620"/>
    <lineage>
        <taxon>Bacteria</taxon>
        <taxon>Bacillati</taxon>
        <taxon>Bacillota</taxon>
        <taxon>Clostridia</taxon>
        <taxon>Lachnospirales</taxon>
        <taxon>Lachnospiraceae</taxon>
        <taxon>Lachnospira</taxon>
    </lineage>
</organism>
<protein>
    <recommendedName>
        <fullName evidence="1">Argininosuccinate synthase</fullName>
        <ecNumber evidence="1">6.3.4.5</ecNumber>
    </recommendedName>
    <alternativeName>
        <fullName evidence="1">Citrulline--aspartate ligase</fullName>
    </alternativeName>
</protein>
<proteinExistence type="inferred from homology"/>
<comment type="catalytic activity">
    <reaction evidence="1">
        <text>L-citrulline + L-aspartate + ATP = 2-(N(omega)-L-arginino)succinate + AMP + diphosphate + H(+)</text>
        <dbReference type="Rhea" id="RHEA:10932"/>
        <dbReference type="ChEBI" id="CHEBI:15378"/>
        <dbReference type="ChEBI" id="CHEBI:29991"/>
        <dbReference type="ChEBI" id="CHEBI:30616"/>
        <dbReference type="ChEBI" id="CHEBI:33019"/>
        <dbReference type="ChEBI" id="CHEBI:57472"/>
        <dbReference type="ChEBI" id="CHEBI:57743"/>
        <dbReference type="ChEBI" id="CHEBI:456215"/>
        <dbReference type="EC" id="6.3.4.5"/>
    </reaction>
</comment>
<comment type="pathway">
    <text evidence="1">Amino-acid biosynthesis; L-arginine biosynthesis; L-arginine from L-ornithine and carbamoyl phosphate: step 2/3.</text>
</comment>
<comment type="subunit">
    <text evidence="1">Homotetramer.</text>
</comment>
<comment type="subcellular location">
    <subcellularLocation>
        <location evidence="1">Cytoplasm</location>
    </subcellularLocation>
</comment>
<comment type="similarity">
    <text evidence="1">Belongs to the argininosuccinate synthase family. Type 1 subfamily.</text>
</comment>
<feature type="chain" id="PRO_1000201681" description="Argininosuccinate synthase">
    <location>
        <begin position="1"/>
        <end position="408"/>
    </location>
</feature>
<feature type="binding site" evidence="1">
    <location>
        <begin position="8"/>
        <end position="16"/>
    </location>
    <ligand>
        <name>ATP</name>
        <dbReference type="ChEBI" id="CHEBI:30616"/>
    </ligand>
</feature>
<feature type="binding site" evidence="1">
    <location>
        <position position="35"/>
    </location>
    <ligand>
        <name>ATP</name>
        <dbReference type="ChEBI" id="CHEBI:30616"/>
    </ligand>
</feature>
<feature type="binding site" evidence="1">
    <location>
        <position position="86"/>
    </location>
    <ligand>
        <name>L-citrulline</name>
        <dbReference type="ChEBI" id="CHEBI:57743"/>
    </ligand>
</feature>
<feature type="binding site" evidence="1">
    <location>
        <position position="91"/>
    </location>
    <ligand>
        <name>L-citrulline</name>
        <dbReference type="ChEBI" id="CHEBI:57743"/>
    </ligand>
</feature>
<feature type="binding site" evidence="1">
    <location>
        <position position="116"/>
    </location>
    <ligand>
        <name>ATP</name>
        <dbReference type="ChEBI" id="CHEBI:30616"/>
    </ligand>
</feature>
<feature type="binding site" evidence="1">
    <location>
        <position position="118"/>
    </location>
    <ligand>
        <name>L-aspartate</name>
        <dbReference type="ChEBI" id="CHEBI:29991"/>
    </ligand>
</feature>
<feature type="binding site" evidence="1">
    <location>
        <position position="122"/>
    </location>
    <ligand>
        <name>L-aspartate</name>
        <dbReference type="ChEBI" id="CHEBI:29991"/>
    </ligand>
</feature>
<feature type="binding site" evidence="1">
    <location>
        <position position="122"/>
    </location>
    <ligand>
        <name>L-citrulline</name>
        <dbReference type="ChEBI" id="CHEBI:57743"/>
    </ligand>
</feature>
<feature type="binding site" evidence="1">
    <location>
        <position position="123"/>
    </location>
    <ligand>
        <name>L-aspartate</name>
        <dbReference type="ChEBI" id="CHEBI:29991"/>
    </ligand>
</feature>
<feature type="binding site" evidence="1">
    <location>
        <position position="126"/>
    </location>
    <ligand>
        <name>L-citrulline</name>
        <dbReference type="ChEBI" id="CHEBI:57743"/>
    </ligand>
</feature>
<feature type="binding site" evidence="1">
    <location>
        <position position="177"/>
    </location>
    <ligand>
        <name>L-citrulline</name>
        <dbReference type="ChEBI" id="CHEBI:57743"/>
    </ligand>
</feature>
<feature type="binding site" evidence="1">
    <location>
        <position position="186"/>
    </location>
    <ligand>
        <name>L-citrulline</name>
        <dbReference type="ChEBI" id="CHEBI:57743"/>
    </ligand>
</feature>
<feature type="binding site" evidence="1">
    <location>
        <position position="263"/>
    </location>
    <ligand>
        <name>L-citrulline</name>
        <dbReference type="ChEBI" id="CHEBI:57743"/>
    </ligand>
</feature>
<feature type="binding site" evidence="1">
    <location>
        <position position="275"/>
    </location>
    <ligand>
        <name>L-citrulline</name>
        <dbReference type="ChEBI" id="CHEBI:57743"/>
    </ligand>
</feature>
<reference key="1">
    <citation type="journal article" date="2009" name="Proc. Natl. Acad. Sci. U.S.A.">
        <title>Characterizing a model human gut microbiota composed of members of its two dominant bacterial phyla.</title>
        <authorList>
            <person name="Mahowald M.A."/>
            <person name="Rey F.E."/>
            <person name="Seedorf H."/>
            <person name="Turnbaugh P.J."/>
            <person name="Fulton R.S."/>
            <person name="Wollam A."/>
            <person name="Shah N."/>
            <person name="Wang C."/>
            <person name="Magrini V."/>
            <person name="Wilson R.K."/>
            <person name="Cantarel B.L."/>
            <person name="Coutinho P.M."/>
            <person name="Henrissat B."/>
            <person name="Crock L.W."/>
            <person name="Russell A."/>
            <person name="Verberkmoes N.C."/>
            <person name="Hettich R.L."/>
            <person name="Gordon J.I."/>
        </authorList>
    </citation>
    <scope>NUCLEOTIDE SEQUENCE [LARGE SCALE GENOMIC DNA]</scope>
    <source>
        <strain>ATCC 27750 / DSM 3376 / VPI C15-48 / C15-B4</strain>
    </source>
</reference>
<keyword id="KW-0028">Amino-acid biosynthesis</keyword>
<keyword id="KW-0055">Arginine biosynthesis</keyword>
<keyword id="KW-0067">ATP-binding</keyword>
<keyword id="KW-0963">Cytoplasm</keyword>
<keyword id="KW-0436">Ligase</keyword>
<keyword id="KW-0547">Nucleotide-binding</keyword>
<keyword id="KW-1185">Reference proteome</keyword>
<gene>
    <name evidence="1" type="primary">argG</name>
    <name type="ordered locus">EUBELI_00592</name>
</gene>
<dbReference type="EC" id="6.3.4.5" evidence="1"/>
<dbReference type="EMBL" id="CP001104">
    <property type="protein sequence ID" value="ACR71605.1"/>
    <property type="molecule type" value="Genomic_DNA"/>
</dbReference>
<dbReference type="RefSeq" id="WP_012738841.1">
    <property type="nucleotide sequence ID" value="NC_012778.1"/>
</dbReference>
<dbReference type="SMR" id="C4Z4C1"/>
<dbReference type="STRING" id="515620.EUBELI_00592"/>
<dbReference type="GeneID" id="41355345"/>
<dbReference type="KEGG" id="eel:EUBELI_00592"/>
<dbReference type="eggNOG" id="COG0137">
    <property type="taxonomic scope" value="Bacteria"/>
</dbReference>
<dbReference type="HOGENOM" id="CLU_032784_4_2_9"/>
<dbReference type="UniPathway" id="UPA00068">
    <property type="reaction ID" value="UER00113"/>
</dbReference>
<dbReference type="Proteomes" id="UP000001476">
    <property type="component" value="Chromosome"/>
</dbReference>
<dbReference type="GO" id="GO:0005737">
    <property type="term" value="C:cytoplasm"/>
    <property type="evidence" value="ECO:0007669"/>
    <property type="project" value="UniProtKB-SubCell"/>
</dbReference>
<dbReference type="GO" id="GO:0004055">
    <property type="term" value="F:argininosuccinate synthase activity"/>
    <property type="evidence" value="ECO:0007669"/>
    <property type="project" value="UniProtKB-UniRule"/>
</dbReference>
<dbReference type="GO" id="GO:0005524">
    <property type="term" value="F:ATP binding"/>
    <property type="evidence" value="ECO:0007669"/>
    <property type="project" value="UniProtKB-UniRule"/>
</dbReference>
<dbReference type="GO" id="GO:0000053">
    <property type="term" value="P:argininosuccinate metabolic process"/>
    <property type="evidence" value="ECO:0007669"/>
    <property type="project" value="TreeGrafter"/>
</dbReference>
<dbReference type="GO" id="GO:0006526">
    <property type="term" value="P:L-arginine biosynthetic process"/>
    <property type="evidence" value="ECO:0007669"/>
    <property type="project" value="UniProtKB-UniRule"/>
</dbReference>
<dbReference type="GO" id="GO:0000050">
    <property type="term" value="P:urea cycle"/>
    <property type="evidence" value="ECO:0007669"/>
    <property type="project" value="TreeGrafter"/>
</dbReference>
<dbReference type="CDD" id="cd01999">
    <property type="entry name" value="ASS"/>
    <property type="match status" value="1"/>
</dbReference>
<dbReference type="FunFam" id="3.40.50.620:FF:000019">
    <property type="entry name" value="Argininosuccinate synthase"/>
    <property type="match status" value="1"/>
</dbReference>
<dbReference type="FunFam" id="3.90.1260.10:FF:000007">
    <property type="entry name" value="Argininosuccinate synthase"/>
    <property type="match status" value="1"/>
</dbReference>
<dbReference type="Gene3D" id="3.90.1260.10">
    <property type="entry name" value="Argininosuccinate synthetase, chain A, domain 2"/>
    <property type="match status" value="1"/>
</dbReference>
<dbReference type="Gene3D" id="3.40.50.620">
    <property type="entry name" value="HUPs"/>
    <property type="match status" value="1"/>
</dbReference>
<dbReference type="Gene3D" id="1.20.5.470">
    <property type="entry name" value="Single helix bin"/>
    <property type="match status" value="1"/>
</dbReference>
<dbReference type="HAMAP" id="MF_00005">
    <property type="entry name" value="Arg_succ_synth_type1"/>
    <property type="match status" value="1"/>
</dbReference>
<dbReference type="InterPro" id="IPR048268">
    <property type="entry name" value="Arginosuc_syn_C"/>
</dbReference>
<dbReference type="InterPro" id="IPR048267">
    <property type="entry name" value="Arginosuc_syn_N"/>
</dbReference>
<dbReference type="InterPro" id="IPR001518">
    <property type="entry name" value="Arginosuc_synth"/>
</dbReference>
<dbReference type="InterPro" id="IPR018223">
    <property type="entry name" value="Arginosuc_synth_CS"/>
</dbReference>
<dbReference type="InterPro" id="IPR023434">
    <property type="entry name" value="Arginosuc_synth_type_1_subfam"/>
</dbReference>
<dbReference type="InterPro" id="IPR024074">
    <property type="entry name" value="AS_cat/multimer_dom_body"/>
</dbReference>
<dbReference type="InterPro" id="IPR014729">
    <property type="entry name" value="Rossmann-like_a/b/a_fold"/>
</dbReference>
<dbReference type="NCBIfam" id="TIGR00032">
    <property type="entry name" value="argG"/>
    <property type="match status" value="1"/>
</dbReference>
<dbReference type="NCBIfam" id="NF001770">
    <property type="entry name" value="PRK00509.1"/>
    <property type="match status" value="1"/>
</dbReference>
<dbReference type="PANTHER" id="PTHR11587">
    <property type="entry name" value="ARGININOSUCCINATE SYNTHASE"/>
    <property type="match status" value="1"/>
</dbReference>
<dbReference type="PANTHER" id="PTHR11587:SF2">
    <property type="entry name" value="ARGININOSUCCINATE SYNTHASE"/>
    <property type="match status" value="1"/>
</dbReference>
<dbReference type="Pfam" id="PF20979">
    <property type="entry name" value="Arginosuc_syn_C"/>
    <property type="match status" value="1"/>
</dbReference>
<dbReference type="Pfam" id="PF00764">
    <property type="entry name" value="Arginosuc_synth"/>
    <property type="match status" value="1"/>
</dbReference>
<dbReference type="SUPFAM" id="SSF52402">
    <property type="entry name" value="Adenine nucleotide alpha hydrolases-like"/>
    <property type="match status" value="1"/>
</dbReference>
<dbReference type="SUPFAM" id="SSF69864">
    <property type="entry name" value="Argininosuccinate synthetase, C-terminal domain"/>
    <property type="match status" value="1"/>
</dbReference>
<dbReference type="PROSITE" id="PS00564">
    <property type="entry name" value="ARGININOSUCCIN_SYN_1"/>
    <property type="match status" value="1"/>
</dbReference>
<dbReference type="PROSITE" id="PS00565">
    <property type="entry name" value="ARGININOSUCCIN_SYN_2"/>
    <property type="match status" value="1"/>
</dbReference>
<evidence type="ECO:0000255" key="1">
    <source>
        <dbReference type="HAMAP-Rule" id="MF_00005"/>
    </source>
</evidence>
<accession>C4Z4C1</accession>